<sequence>MQTHEIRKRFLDHFVKAGHTEVPSASVILDDPNLLFVNAGMVQFVPYFLGARTPPYPTATSIQKCIRTPDIDEVGITTRHNTFFQMAGNFSFGDYFKREAIELAWTLLTGSVEQGGYGLDPERIWTTVYFDDDEAVRLWQEIAGLPAERIQRRGMEDNYWSMGIPGPCGPSSEIYYDRGEEFGVGGGPIANEDRYVELWNLVFMQSERGEGTSKTDFEILGPLPRKNIDTGMGVERVAFVLQGVHNVYETDLLRPVIDAVAARAPRPYDAGNHDDDVRYRIIADHSRTAAILIGDGVTPGNDGRGYVLRRLLRRVIRSARLLDIEGPIVGDLMATVRDAMGPSYPELVTDFDRIARIAVAEETAFNRTLAAGSKLFDEVASTTKATGAKSISGSDAFTLHDTYGFPIELTLEMASEAGLQVDEVGFRELMAEQRRRAKADAAARKHAHADLTAYRELVDAGPTEFTGFDELSSEARILGIFVDGKRVPVVTHGGDGADRVELVLDRTPLYAESGGQIADEGTISGTGAGESARAAVTDVQKIAKTLWVHRVNVESGEFVEGDTVIAAVDPQWRRGATQGHSGTHMVHAALRQVLGPNAVQAGSLNRPGYLRFDFNWQGPLTEEQRTQIEEVTNQAVQADFEVHTFTEQLEKAKAMGAIALFGESYPEQVRVVEIGGPFSLELCGGTHVHNSAQIGPVTILGESSVGSGVRRVEAYVGLDSFRHLAKERALMAGLASSLKVPSEEVPARVANLVERLRAAEKELERMRLASARAAAGNAAAGAERIGNVRVVAQRMSGGMTAADLRSLVGDIRGKLGSDPAVVALIAEGEGGSVPYAVAANPAAQDLGIRANDLVKQLAAPVDGRGGGKADLAQGSGKDPAGIDAALDAVRSEIAAIARVG</sequence>
<accession>A0QI75</accession>
<keyword id="KW-0030">Aminoacyl-tRNA synthetase</keyword>
<keyword id="KW-0067">ATP-binding</keyword>
<keyword id="KW-0963">Cytoplasm</keyword>
<keyword id="KW-0436">Ligase</keyword>
<keyword id="KW-0479">Metal-binding</keyword>
<keyword id="KW-0547">Nucleotide-binding</keyword>
<keyword id="KW-0648">Protein biosynthesis</keyword>
<keyword id="KW-0694">RNA-binding</keyword>
<keyword id="KW-0820">tRNA-binding</keyword>
<keyword id="KW-0862">Zinc</keyword>
<evidence type="ECO:0000255" key="1">
    <source>
        <dbReference type="HAMAP-Rule" id="MF_00036"/>
    </source>
</evidence>
<feature type="chain" id="PRO_0000347679" description="Alanine--tRNA ligase">
    <location>
        <begin position="1"/>
        <end position="900"/>
    </location>
</feature>
<feature type="binding site" evidence="1">
    <location>
        <position position="580"/>
    </location>
    <ligand>
        <name>Zn(2+)</name>
        <dbReference type="ChEBI" id="CHEBI:29105"/>
    </ligand>
</feature>
<feature type="binding site" evidence="1">
    <location>
        <position position="584"/>
    </location>
    <ligand>
        <name>Zn(2+)</name>
        <dbReference type="ChEBI" id="CHEBI:29105"/>
    </ligand>
</feature>
<feature type="binding site" evidence="1">
    <location>
        <position position="683"/>
    </location>
    <ligand>
        <name>Zn(2+)</name>
        <dbReference type="ChEBI" id="CHEBI:29105"/>
    </ligand>
</feature>
<feature type="binding site" evidence="1">
    <location>
        <position position="687"/>
    </location>
    <ligand>
        <name>Zn(2+)</name>
        <dbReference type="ChEBI" id="CHEBI:29105"/>
    </ligand>
</feature>
<name>SYA_MYCA1</name>
<reference key="1">
    <citation type="submission" date="2006-10" db="EMBL/GenBank/DDBJ databases">
        <authorList>
            <person name="Fleischmann R.D."/>
            <person name="Dodson R.J."/>
            <person name="Haft D.H."/>
            <person name="Merkel J.S."/>
            <person name="Nelson W.C."/>
            <person name="Fraser C.M."/>
        </authorList>
    </citation>
    <scope>NUCLEOTIDE SEQUENCE [LARGE SCALE GENOMIC DNA]</scope>
    <source>
        <strain>104</strain>
    </source>
</reference>
<dbReference type="EC" id="6.1.1.7" evidence="1"/>
<dbReference type="EMBL" id="CP000479">
    <property type="protein sequence ID" value="ABK68891.1"/>
    <property type="molecule type" value="Genomic_DNA"/>
</dbReference>
<dbReference type="RefSeq" id="WP_003872646.1">
    <property type="nucleotide sequence ID" value="NC_008595.1"/>
</dbReference>
<dbReference type="SMR" id="A0QI75"/>
<dbReference type="KEGG" id="mav:MAV_3431"/>
<dbReference type="HOGENOM" id="CLU_004485_1_1_11"/>
<dbReference type="Proteomes" id="UP000001574">
    <property type="component" value="Chromosome"/>
</dbReference>
<dbReference type="GO" id="GO:0005829">
    <property type="term" value="C:cytosol"/>
    <property type="evidence" value="ECO:0007669"/>
    <property type="project" value="TreeGrafter"/>
</dbReference>
<dbReference type="GO" id="GO:0004813">
    <property type="term" value="F:alanine-tRNA ligase activity"/>
    <property type="evidence" value="ECO:0007669"/>
    <property type="project" value="UniProtKB-UniRule"/>
</dbReference>
<dbReference type="GO" id="GO:0002161">
    <property type="term" value="F:aminoacyl-tRNA deacylase activity"/>
    <property type="evidence" value="ECO:0007669"/>
    <property type="project" value="TreeGrafter"/>
</dbReference>
<dbReference type="GO" id="GO:0005524">
    <property type="term" value="F:ATP binding"/>
    <property type="evidence" value="ECO:0007669"/>
    <property type="project" value="UniProtKB-UniRule"/>
</dbReference>
<dbReference type="GO" id="GO:0000049">
    <property type="term" value="F:tRNA binding"/>
    <property type="evidence" value="ECO:0007669"/>
    <property type="project" value="UniProtKB-KW"/>
</dbReference>
<dbReference type="GO" id="GO:0008270">
    <property type="term" value="F:zinc ion binding"/>
    <property type="evidence" value="ECO:0007669"/>
    <property type="project" value="UniProtKB-UniRule"/>
</dbReference>
<dbReference type="GO" id="GO:0006419">
    <property type="term" value="P:alanyl-tRNA aminoacylation"/>
    <property type="evidence" value="ECO:0007669"/>
    <property type="project" value="UniProtKB-UniRule"/>
</dbReference>
<dbReference type="CDD" id="cd00673">
    <property type="entry name" value="AlaRS_core"/>
    <property type="match status" value="1"/>
</dbReference>
<dbReference type="FunFam" id="2.40.30.130:FF:000011">
    <property type="entry name" value="Alanine--tRNA ligase"/>
    <property type="match status" value="1"/>
</dbReference>
<dbReference type="FunFam" id="3.10.310.40:FF:000001">
    <property type="entry name" value="Alanine--tRNA ligase"/>
    <property type="match status" value="1"/>
</dbReference>
<dbReference type="FunFam" id="3.30.54.20:FF:000001">
    <property type="entry name" value="Alanine--tRNA ligase"/>
    <property type="match status" value="1"/>
</dbReference>
<dbReference type="FunFam" id="3.30.930.10:FF:000004">
    <property type="entry name" value="Alanine--tRNA ligase"/>
    <property type="match status" value="1"/>
</dbReference>
<dbReference type="FunFam" id="3.30.980.10:FF:000004">
    <property type="entry name" value="Alanine--tRNA ligase, cytoplasmic"/>
    <property type="match status" value="1"/>
</dbReference>
<dbReference type="Gene3D" id="2.40.30.130">
    <property type="match status" value="1"/>
</dbReference>
<dbReference type="Gene3D" id="3.10.310.40">
    <property type="match status" value="1"/>
</dbReference>
<dbReference type="Gene3D" id="3.30.54.20">
    <property type="match status" value="1"/>
</dbReference>
<dbReference type="Gene3D" id="6.10.250.550">
    <property type="match status" value="1"/>
</dbReference>
<dbReference type="Gene3D" id="3.30.930.10">
    <property type="entry name" value="Bira Bifunctional Protein, Domain 2"/>
    <property type="match status" value="1"/>
</dbReference>
<dbReference type="Gene3D" id="3.30.980.10">
    <property type="entry name" value="Threonyl-trna Synthetase, Chain A, domain 2"/>
    <property type="match status" value="1"/>
</dbReference>
<dbReference type="HAMAP" id="MF_00036_B">
    <property type="entry name" value="Ala_tRNA_synth_B"/>
    <property type="match status" value="1"/>
</dbReference>
<dbReference type="InterPro" id="IPR045864">
    <property type="entry name" value="aa-tRNA-synth_II/BPL/LPL"/>
</dbReference>
<dbReference type="InterPro" id="IPR002318">
    <property type="entry name" value="Ala-tRNA-lgiase_IIc"/>
</dbReference>
<dbReference type="InterPro" id="IPR018162">
    <property type="entry name" value="Ala-tRNA-ligase_IIc_anticod-bd"/>
</dbReference>
<dbReference type="InterPro" id="IPR018165">
    <property type="entry name" value="Ala-tRNA-synth_IIc_core"/>
</dbReference>
<dbReference type="InterPro" id="IPR018164">
    <property type="entry name" value="Ala-tRNA-synth_IIc_N"/>
</dbReference>
<dbReference type="InterPro" id="IPR050058">
    <property type="entry name" value="Ala-tRNA_ligase"/>
</dbReference>
<dbReference type="InterPro" id="IPR023033">
    <property type="entry name" value="Ala_tRNA_ligase_euk/bac"/>
</dbReference>
<dbReference type="InterPro" id="IPR003156">
    <property type="entry name" value="DHHA1_dom"/>
</dbReference>
<dbReference type="InterPro" id="IPR018163">
    <property type="entry name" value="Thr/Ala-tRNA-synth_IIc_edit"/>
</dbReference>
<dbReference type="InterPro" id="IPR009000">
    <property type="entry name" value="Transl_B-barrel_sf"/>
</dbReference>
<dbReference type="InterPro" id="IPR012947">
    <property type="entry name" value="tRNA_SAD"/>
</dbReference>
<dbReference type="NCBIfam" id="TIGR00344">
    <property type="entry name" value="alaS"/>
    <property type="match status" value="1"/>
</dbReference>
<dbReference type="PANTHER" id="PTHR11777:SF9">
    <property type="entry name" value="ALANINE--TRNA LIGASE, CYTOPLASMIC"/>
    <property type="match status" value="1"/>
</dbReference>
<dbReference type="PANTHER" id="PTHR11777">
    <property type="entry name" value="ALANYL-TRNA SYNTHETASE"/>
    <property type="match status" value="1"/>
</dbReference>
<dbReference type="Pfam" id="PF02272">
    <property type="entry name" value="DHHA1"/>
    <property type="match status" value="1"/>
</dbReference>
<dbReference type="Pfam" id="PF01411">
    <property type="entry name" value="tRNA-synt_2c"/>
    <property type="match status" value="1"/>
</dbReference>
<dbReference type="Pfam" id="PF07973">
    <property type="entry name" value="tRNA_SAD"/>
    <property type="match status" value="1"/>
</dbReference>
<dbReference type="PRINTS" id="PR00980">
    <property type="entry name" value="TRNASYNTHALA"/>
</dbReference>
<dbReference type="SMART" id="SM00863">
    <property type="entry name" value="tRNA_SAD"/>
    <property type="match status" value="1"/>
</dbReference>
<dbReference type="SUPFAM" id="SSF55681">
    <property type="entry name" value="Class II aaRS and biotin synthetases"/>
    <property type="match status" value="1"/>
</dbReference>
<dbReference type="SUPFAM" id="SSF101353">
    <property type="entry name" value="Putative anticodon-binding domain of alanyl-tRNA synthetase (AlaRS)"/>
    <property type="match status" value="1"/>
</dbReference>
<dbReference type="SUPFAM" id="SSF55186">
    <property type="entry name" value="ThrRS/AlaRS common domain"/>
    <property type="match status" value="1"/>
</dbReference>
<dbReference type="SUPFAM" id="SSF50447">
    <property type="entry name" value="Translation proteins"/>
    <property type="match status" value="1"/>
</dbReference>
<dbReference type="PROSITE" id="PS50860">
    <property type="entry name" value="AA_TRNA_LIGASE_II_ALA"/>
    <property type="match status" value="1"/>
</dbReference>
<proteinExistence type="inferred from homology"/>
<comment type="function">
    <text evidence="1">Catalyzes the attachment of alanine to tRNA(Ala) in a two-step reaction: alanine is first activated by ATP to form Ala-AMP and then transferred to the acceptor end of tRNA(Ala). Also edits incorrectly charged Ser-tRNA(Ala) and Gly-tRNA(Ala) via its editing domain.</text>
</comment>
<comment type="catalytic activity">
    <reaction evidence="1">
        <text>tRNA(Ala) + L-alanine + ATP = L-alanyl-tRNA(Ala) + AMP + diphosphate</text>
        <dbReference type="Rhea" id="RHEA:12540"/>
        <dbReference type="Rhea" id="RHEA-COMP:9657"/>
        <dbReference type="Rhea" id="RHEA-COMP:9923"/>
        <dbReference type="ChEBI" id="CHEBI:30616"/>
        <dbReference type="ChEBI" id="CHEBI:33019"/>
        <dbReference type="ChEBI" id="CHEBI:57972"/>
        <dbReference type="ChEBI" id="CHEBI:78442"/>
        <dbReference type="ChEBI" id="CHEBI:78497"/>
        <dbReference type="ChEBI" id="CHEBI:456215"/>
        <dbReference type="EC" id="6.1.1.7"/>
    </reaction>
</comment>
<comment type="cofactor">
    <cofactor evidence="1">
        <name>Zn(2+)</name>
        <dbReference type="ChEBI" id="CHEBI:29105"/>
    </cofactor>
    <text evidence="1">Binds 1 zinc ion per subunit.</text>
</comment>
<comment type="subcellular location">
    <subcellularLocation>
        <location evidence="1">Cytoplasm</location>
    </subcellularLocation>
</comment>
<comment type="domain">
    <text evidence="1">Consists of three domains; the N-terminal catalytic domain, the editing domain and the C-terminal C-Ala domain. The editing domain removes incorrectly charged amino acids, while the C-Ala domain, along with tRNA(Ala), serves as a bridge to cooperatively bring together the editing and aminoacylation centers thus stimulating deacylation of misacylated tRNAs.</text>
</comment>
<comment type="similarity">
    <text evidence="1">Belongs to the class-II aminoacyl-tRNA synthetase family.</text>
</comment>
<protein>
    <recommendedName>
        <fullName evidence="1">Alanine--tRNA ligase</fullName>
        <ecNumber evidence="1">6.1.1.7</ecNumber>
    </recommendedName>
    <alternativeName>
        <fullName evidence="1">Alanyl-tRNA synthetase</fullName>
        <shortName evidence="1">AlaRS</shortName>
    </alternativeName>
</protein>
<gene>
    <name evidence="1" type="primary">alaS</name>
    <name type="ordered locus">MAV_3431</name>
</gene>
<organism>
    <name type="scientific">Mycobacterium avium (strain 104)</name>
    <dbReference type="NCBI Taxonomy" id="243243"/>
    <lineage>
        <taxon>Bacteria</taxon>
        <taxon>Bacillati</taxon>
        <taxon>Actinomycetota</taxon>
        <taxon>Actinomycetes</taxon>
        <taxon>Mycobacteriales</taxon>
        <taxon>Mycobacteriaceae</taxon>
        <taxon>Mycobacterium</taxon>
        <taxon>Mycobacterium avium complex (MAC)</taxon>
    </lineage>
</organism>